<proteinExistence type="inferred from homology"/>
<evidence type="ECO:0000255" key="1">
    <source>
        <dbReference type="HAMAP-Rule" id="MF_01694"/>
    </source>
</evidence>
<evidence type="ECO:0000255" key="2">
    <source>
        <dbReference type="PROSITE-ProRule" id="PRU01266"/>
    </source>
</evidence>
<protein>
    <recommendedName>
        <fullName evidence="1">Biotin synthase</fullName>
        <ecNumber evidence="1">2.8.1.6</ecNumber>
    </recommendedName>
</protein>
<comment type="function">
    <text evidence="1">Catalyzes the conversion of dethiobiotin (DTB) to biotin by the insertion of a sulfur atom into dethiobiotin via a radical-based mechanism.</text>
</comment>
<comment type="catalytic activity">
    <reaction evidence="1">
        <text>(4R,5S)-dethiobiotin + (sulfur carrier)-SH + 2 reduced [2Fe-2S]-[ferredoxin] + 2 S-adenosyl-L-methionine = (sulfur carrier)-H + biotin + 2 5'-deoxyadenosine + 2 L-methionine + 2 oxidized [2Fe-2S]-[ferredoxin]</text>
        <dbReference type="Rhea" id="RHEA:22060"/>
        <dbReference type="Rhea" id="RHEA-COMP:10000"/>
        <dbReference type="Rhea" id="RHEA-COMP:10001"/>
        <dbReference type="Rhea" id="RHEA-COMP:14737"/>
        <dbReference type="Rhea" id="RHEA-COMP:14739"/>
        <dbReference type="ChEBI" id="CHEBI:17319"/>
        <dbReference type="ChEBI" id="CHEBI:29917"/>
        <dbReference type="ChEBI" id="CHEBI:33737"/>
        <dbReference type="ChEBI" id="CHEBI:33738"/>
        <dbReference type="ChEBI" id="CHEBI:57586"/>
        <dbReference type="ChEBI" id="CHEBI:57844"/>
        <dbReference type="ChEBI" id="CHEBI:59789"/>
        <dbReference type="ChEBI" id="CHEBI:64428"/>
        <dbReference type="ChEBI" id="CHEBI:149473"/>
        <dbReference type="EC" id="2.8.1.6"/>
    </reaction>
</comment>
<comment type="cofactor">
    <cofactor evidence="1">
        <name>[4Fe-4S] cluster</name>
        <dbReference type="ChEBI" id="CHEBI:49883"/>
    </cofactor>
    <text evidence="1">Binds 1 [4Fe-4S] cluster. The cluster is coordinated with 3 cysteines and an exchangeable S-adenosyl-L-methionine.</text>
</comment>
<comment type="cofactor">
    <cofactor evidence="1">
        <name>[2Fe-2S] cluster</name>
        <dbReference type="ChEBI" id="CHEBI:190135"/>
    </cofactor>
    <text evidence="1">Binds 1 [2Fe-2S] cluster. The cluster is coordinated with 3 cysteines and 1 arginine.</text>
</comment>
<comment type="pathway">
    <text evidence="1">Cofactor biosynthesis; biotin biosynthesis; biotin from 7,8-diaminononanoate: step 2/2.</text>
</comment>
<comment type="subunit">
    <text evidence="1">Homodimer.</text>
</comment>
<comment type="similarity">
    <text evidence="1">Belongs to the radical SAM superfamily. Biotin synthase family.</text>
</comment>
<gene>
    <name evidence="1" type="primary">bioB</name>
    <name type="ordered locus">Shewmr4_2359</name>
</gene>
<feature type="chain" id="PRO_0000381627" description="Biotin synthase">
    <location>
        <begin position="1"/>
        <end position="350"/>
    </location>
</feature>
<feature type="domain" description="Radical SAM core" evidence="2">
    <location>
        <begin position="41"/>
        <end position="268"/>
    </location>
</feature>
<feature type="binding site" evidence="1">
    <location>
        <position position="56"/>
    </location>
    <ligand>
        <name>[4Fe-4S] cluster</name>
        <dbReference type="ChEBI" id="CHEBI:49883"/>
        <note>4Fe-4S-S-AdoMet</note>
    </ligand>
</feature>
<feature type="binding site" evidence="1">
    <location>
        <position position="60"/>
    </location>
    <ligand>
        <name>[4Fe-4S] cluster</name>
        <dbReference type="ChEBI" id="CHEBI:49883"/>
        <note>4Fe-4S-S-AdoMet</note>
    </ligand>
</feature>
<feature type="binding site" evidence="1">
    <location>
        <position position="63"/>
    </location>
    <ligand>
        <name>[4Fe-4S] cluster</name>
        <dbReference type="ChEBI" id="CHEBI:49883"/>
        <note>4Fe-4S-S-AdoMet</note>
    </ligand>
</feature>
<feature type="binding site" evidence="1">
    <location>
        <position position="100"/>
    </location>
    <ligand>
        <name>[2Fe-2S] cluster</name>
        <dbReference type="ChEBI" id="CHEBI:190135"/>
    </ligand>
</feature>
<feature type="binding site" evidence="1">
    <location>
        <position position="131"/>
    </location>
    <ligand>
        <name>[2Fe-2S] cluster</name>
        <dbReference type="ChEBI" id="CHEBI:190135"/>
    </ligand>
</feature>
<feature type="binding site" evidence="1">
    <location>
        <position position="191"/>
    </location>
    <ligand>
        <name>[2Fe-2S] cluster</name>
        <dbReference type="ChEBI" id="CHEBI:190135"/>
    </ligand>
</feature>
<feature type="binding site" evidence="1">
    <location>
        <position position="263"/>
    </location>
    <ligand>
        <name>[2Fe-2S] cluster</name>
        <dbReference type="ChEBI" id="CHEBI:190135"/>
    </ligand>
</feature>
<reference key="1">
    <citation type="submission" date="2006-08" db="EMBL/GenBank/DDBJ databases">
        <title>Complete sequence of Shewanella sp. MR-4.</title>
        <authorList>
            <consortium name="US DOE Joint Genome Institute"/>
            <person name="Copeland A."/>
            <person name="Lucas S."/>
            <person name="Lapidus A."/>
            <person name="Barry K."/>
            <person name="Detter J.C."/>
            <person name="Glavina del Rio T."/>
            <person name="Hammon N."/>
            <person name="Israni S."/>
            <person name="Dalin E."/>
            <person name="Tice H."/>
            <person name="Pitluck S."/>
            <person name="Kiss H."/>
            <person name="Brettin T."/>
            <person name="Bruce D."/>
            <person name="Han C."/>
            <person name="Tapia R."/>
            <person name="Gilna P."/>
            <person name="Schmutz J."/>
            <person name="Larimer F."/>
            <person name="Land M."/>
            <person name="Hauser L."/>
            <person name="Kyrpides N."/>
            <person name="Mikhailova N."/>
            <person name="Nealson K."/>
            <person name="Konstantinidis K."/>
            <person name="Klappenbach J."/>
            <person name="Tiedje J."/>
            <person name="Richardson P."/>
        </authorList>
    </citation>
    <scope>NUCLEOTIDE SEQUENCE [LARGE SCALE GENOMIC DNA]</scope>
    <source>
        <strain>MR-4</strain>
    </source>
</reference>
<organism>
    <name type="scientific">Shewanella sp. (strain MR-4)</name>
    <dbReference type="NCBI Taxonomy" id="60480"/>
    <lineage>
        <taxon>Bacteria</taxon>
        <taxon>Pseudomonadati</taxon>
        <taxon>Pseudomonadota</taxon>
        <taxon>Gammaproteobacteria</taxon>
        <taxon>Alteromonadales</taxon>
        <taxon>Shewanellaceae</taxon>
        <taxon>Shewanella</taxon>
    </lineage>
</organism>
<keyword id="KW-0001">2Fe-2S</keyword>
<keyword id="KW-0004">4Fe-4S</keyword>
<keyword id="KW-0093">Biotin biosynthesis</keyword>
<keyword id="KW-0408">Iron</keyword>
<keyword id="KW-0411">Iron-sulfur</keyword>
<keyword id="KW-0479">Metal-binding</keyword>
<keyword id="KW-0949">S-adenosyl-L-methionine</keyword>
<keyword id="KW-0808">Transferase</keyword>
<dbReference type="EC" id="2.8.1.6" evidence="1"/>
<dbReference type="EMBL" id="CP000446">
    <property type="protein sequence ID" value="ABI39430.1"/>
    <property type="molecule type" value="Genomic_DNA"/>
</dbReference>
<dbReference type="RefSeq" id="WP_011623120.1">
    <property type="nucleotide sequence ID" value="NC_008321.1"/>
</dbReference>
<dbReference type="SMR" id="Q0HHN7"/>
<dbReference type="GeneID" id="94728459"/>
<dbReference type="KEGG" id="she:Shewmr4_2359"/>
<dbReference type="HOGENOM" id="CLU_033172_1_2_6"/>
<dbReference type="UniPathway" id="UPA00078">
    <property type="reaction ID" value="UER00162"/>
</dbReference>
<dbReference type="GO" id="GO:0051537">
    <property type="term" value="F:2 iron, 2 sulfur cluster binding"/>
    <property type="evidence" value="ECO:0007669"/>
    <property type="project" value="UniProtKB-KW"/>
</dbReference>
<dbReference type="GO" id="GO:0051539">
    <property type="term" value="F:4 iron, 4 sulfur cluster binding"/>
    <property type="evidence" value="ECO:0007669"/>
    <property type="project" value="UniProtKB-KW"/>
</dbReference>
<dbReference type="GO" id="GO:0004076">
    <property type="term" value="F:biotin synthase activity"/>
    <property type="evidence" value="ECO:0007669"/>
    <property type="project" value="UniProtKB-UniRule"/>
</dbReference>
<dbReference type="GO" id="GO:0005506">
    <property type="term" value="F:iron ion binding"/>
    <property type="evidence" value="ECO:0007669"/>
    <property type="project" value="UniProtKB-UniRule"/>
</dbReference>
<dbReference type="GO" id="GO:0009102">
    <property type="term" value="P:biotin biosynthetic process"/>
    <property type="evidence" value="ECO:0007669"/>
    <property type="project" value="UniProtKB-UniRule"/>
</dbReference>
<dbReference type="CDD" id="cd01335">
    <property type="entry name" value="Radical_SAM"/>
    <property type="match status" value="1"/>
</dbReference>
<dbReference type="FunFam" id="3.20.20.70:FF:000011">
    <property type="entry name" value="Biotin synthase"/>
    <property type="match status" value="1"/>
</dbReference>
<dbReference type="Gene3D" id="3.20.20.70">
    <property type="entry name" value="Aldolase class I"/>
    <property type="match status" value="1"/>
</dbReference>
<dbReference type="HAMAP" id="MF_01694">
    <property type="entry name" value="BioB"/>
    <property type="match status" value="1"/>
</dbReference>
<dbReference type="InterPro" id="IPR013785">
    <property type="entry name" value="Aldolase_TIM"/>
</dbReference>
<dbReference type="InterPro" id="IPR010722">
    <property type="entry name" value="BATS_dom"/>
</dbReference>
<dbReference type="InterPro" id="IPR002684">
    <property type="entry name" value="Biotin_synth/BioAB"/>
</dbReference>
<dbReference type="InterPro" id="IPR024177">
    <property type="entry name" value="Biotin_synthase"/>
</dbReference>
<dbReference type="InterPro" id="IPR006638">
    <property type="entry name" value="Elp3/MiaA/NifB-like_rSAM"/>
</dbReference>
<dbReference type="InterPro" id="IPR007197">
    <property type="entry name" value="rSAM"/>
</dbReference>
<dbReference type="NCBIfam" id="TIGR00433">
    <property type="entry name" value="bioB"/>
    <property type="match status" value="1"/>
</dbReference>
<dbReference type="PANTHER" id="PTHR22976">
    <property type="entry name" value="BIOTIN SYNTHASE"/>
    <property type="match status" value="1"/>
</dbReference>
<dbReference type="PANTHER" id="PTHR22976:SF2">
    <property type="entry name" value="BIOTIN SYNTHASE, MITOCHONDRIAL"/>
    <property type="match status" value="1"/>
</dbReference>
<dbReference type="Pfam" id="PF06968">
    <property type="entry name" value="BATS"/>
    <property type="match status" value="1"/>
</dbReference>
<dbReference type="Pfam" id="PF04055">
    <property type="entry name" value="Radical_SAM"/>
    <property type="match status" value="1"/>
</dbReference>
<dbReference type="PIRSF" id="PIRSF001619">
    <property type="entry name" value="Biotin_synth"/>
    <property type="match status" value="1"/>
</dbReference>
<dbReference type="SFLD" id="SFLDF00272">
    <property type="entry name" value="biotin_synthase"/>
    <property type="match status" value="1"/>
</dbReference>
<dbReference type="SFLD" id="SFLDG01278">
    <property type="entry name" value="biotin_synthase_like"/>
    <property type="match status" value="1"/>
</dbReference>
<dbReference type="SMART" id="SM00876">
    <property type="entry name" value="BATS"/>
    <property type="match status" value="1"/>
</dbReference>
<dbReference type="SMART" id="SM00729">
    <property type="entry name" value="Elp3"/>
    <property type="match status" value="1"/>
</dbReference>
<dbReference type="SUPFAM" id="SSF102114">
    <property type="entry name" value="Radical SAM enzymes"/>
    <property type="match status" value="1"/>
</dbReference>
<dbReference type="PROSITE" id="PS51918">
    <property type="entry name" value="RADICAL_SAM"/>
    <property type="match status" value="1"/>
</dbReference>
<name>BIOB_SHESM</name>
<accession>Q0HHN7</accession>
<sequence length="350" mass="38732">MSQLQVRHDWKREEIEALFALPMNDLLFKAHSIHREVYDPNEVQISRLLSIKTGACPEDCKYCPQSARYDTGLEKERLLAMETVLTEARSAKAAGASRFCMGAAWRNPKDKDMPYLKQMVQEVKALGMETCMTLGMLSAEQANELADAGLDYYNHNLDTSPEYYGDVITTRTYQNRLDTLSHVRASGMKVCSGGIVGMGEKATDRAGLLQQLANLPQHPDSVPINMLVKVAGTPFEKLDDLDPLEFVRTIAVARILMPKSRVRLSAGRENMTDELQAMCFFAGANSIFYGCKLLTTPNPEESDDMGLFRRLGLRPEQGAAATIDDEQAVLAKAAAHQDKASAPFYDAAAL</sequence>